<dbReference type="SMR" id="P0DPY0"/>
<dbReference type="GO" id="GO:0005576">
    <property type="term" value="C:extracellular region"/>
    <property type="evidence" value="ECO:0007669"/>
    <property type="project" value="UniProtKB-SubCell"/>
</dbReference>
<dbReference type="GO" id="GO:0090729">
    <property type="term" value="F:toxin activity"/>
    <property type="evidence" value="ECO:0007669"/>
    <property type="project" value="UniProtKB-KW"/>
</dbReference>
<dbReference type="CDD" id="cd23590">
    <property type="entry name" value="TFP_LU_ECD_Bou"/>
    <property type="match status" value="1"/>
</dbReference>
<dbReference type="InterPro" id="IPR045860">
    <property type="entry name" value="Snake_toxin-like_sf"/>
</dbReference>
<dbReference type="PANTHER" id="PTHR10036">
    <property type="entry name" value="CD59 GLYCOPROTEIN"/>
    <property type="match status" value="1"/>
</dbReference>
<dbReference type="PANTHER" id="PTHR10036:SF3">
    <property type="entry name" value="PROTEIN SLEEPLESS-RELATED"/>
    <property type="match status" value="1"/>
</dbReference>
<dbReference type="SUPFAM" id="SSF57302">
    <property type="entry name" value="Snake toxin-like"/>
    <property type="match status" value="1"/>
</dbReference>
<accession>P0DPY0</accession>
<proteinExistence type="evidence at transcript level"/>
<name>TX53A_ETHRU</name>
<comment type="subcellular location">
    <subcellularLocation>
        <location evidence="4">Secreted</location>
    </subcellularLocation>
</comment>
<comment type="tissue specificity">
    <text evidence="4">Expressed by the venom gland.</text>
</comment>
<comment type="PTM">
    <text evidence="3">Contains 5 disulfide bonds.</text>
</comment>
<comment type="miscellaneous">
    <text evidence="3">The scoloptoxin-05 family has remarkable similarities with the three-finger toxin family commonly found in snakes.</text>
</comment>
<comment type="similarity">
    <text evidence="3">Belongs to the scoloptoxin-05 family.</text>
</comment>
<comment type="online information" name="National Center for Biotechnology Information (NCBI)">
    <link uri="https://www.ncbi.nlm.nih.gov/nuccore/GASI01000194"/>
</comment>
<organism>
    <name type="scientific">Ethmostigmus rubripes</name>
    <name type="common">Giant centipede</name>
    <dbReference type="NCBI Taxonomy" id="62613"/>
    <lineage>
        <taxon>Eukaryota</taxon>
        <taxon>Metazoa</taxon>
        <taxon>Ecdysozoa</taxon>
        <taxon>Arthropoda</taxon>
        <taxon>Myriapoda</taxon>
        <taxon>Chilopoda</taxon>
        <taxon>Pleurostigmophora</taxon>
        <taxon>Scolopendromorpha</taxon>
        <taxon>Scolopendridae</taxon>
        <taxon>Ethmostigmus</taxon>
    </lineage>
</organism>
<feature type="signal peptide" evidence="1">
    <location>
        <begin position="1"/>
        <end position="19"/>
    </location>
</feature>
<feature type="chain" id="PRO_0000446725" description="U-scoloptoxin(05)-Er3a" evidence="3">
    <location>
        <begin position="20"/>
        <end position="132"/>
    </location>
</feature>
<reference key="1">
    <citation type="journal article" date="2014" name="Mol. Biol. Evol.">
        <title>Clawing through evolution: toxin diversification and convergence in the ancient lineage Chilopoda (centipedes).</title>
        <authorList>
            <person name="Undheim E.A."/>
            <person name="Jones A."/>
            <person name="Clauser K.R."/>
            <person name="Holland J.W."/>
            <person name="Pineda S.S."/>
            <person name="King G.F."/>
            <person name="Fry B.G."/>
        </authorList>
    </citation>
    <scope>NUCLEOTIDE SEQUENCE [MRNA]</scope>
    <scope>NOMENCLATURE</scope>
    <source>
        <tissue>Venom gland</tissue>
    </source>
</reference>
<sequence>MRSWFVFVALLAVVFLPSSLDALKCIQCDSQPNRDECKTTLPEARDCPQTVNNYCFKTETFNKNGDLSMLRRYCNVLASTQNGCVDLPGGLGKKCEYSCNTDGCNSVTGLVASRAAYLVTLLPIIFYALSRQ</sequence>
<evidence type="ECO:0000255" key="1"/>
<evidence type="ECO:0000303" key="2">
    <source>
    </source>
</evidence>
<evidence type="ECO:0000305" key="3"/>
<evidence type="ECO:0000305" key="4">
    <source>
    </source>
</evidence>
<keyword id="KW-1015">Disulfide bond</keyword>
<keyword id="KW-0964">Secreted</keyword>
<keyword id="KW-0732">Signal</keyword>
<keyword id="KW-0800">Toxin</keyword>
<protein>
    <recommendedName>
        <fullName evidence="2">U-scoloptoxin(05)-Er3a</fullName>
        <shortName evidence="2">U-SLPTX(05)-Er3a</shortName>
    </recommendedName>
</protein>